<keyword id="KW-0240">DNA-directed RNA polymerase</keyword>
<keyword id="KW-0460">Magnesium</keyword>
<keyword id="KW-0479">Metal-binding</keyword>
<keyword id="KW-0548">Nucleotidyltransferase</keyword>
<keyword id="KW-0804">Transcription</keyword>
<keyword id="KW-0808">Transferase</keyword>
<keyword id="KW-0862">Zinc</keyword>
<name>RPOC_METRJ</name>
<evidence type="ECO:0000255" key="1">
    <source>
        <dbReference type="HAMAP-Rule" id="MF_01322"/>
    </source>
</evidence>
<feature type="chain" id="PRO_1000141782" description="DNA-directed RNA polymerase subunit beta'">
    <location>
        <begin position="1"/>
        <end position="1403"/>
    </location>
</feature>
<feature type="binding site" evidence="1">
    <location>
        <position position="71"/>
    </location>
    <ligand>
        <name>Zn(2+)</name>
        <dbReference type="ChEBI" id="CHEBI:29105"/>
        <label>1</label>
    </ligand>
</feature>
<feature type="binding site" evidence="1">
    <location>
        <position position="73"/>
    </location>
    <ligand>
        <name>Zn(2+)</name>
        <dbReference type="ChEBI" id="CHEBI:29105"/>
        <label>1</label>
    </ligand>
</feature>
<feature type="binding site" evidence="1">
    <location>
        <position position="86"/>
    </location>
    <ligand>
        <name>Zn(2+)</name>
        <dbReference type="ChEBI" id="CHEBI:29105"/>
        <label>1</label>
    </ligand>
</feature>
<feature type="binding site" evidence="1">
    <location>
        <position position="89"/>
    </location>
    <ligand>
        <name>Zn(2+)</name>
        <dbReference type="ChEBI" id="CHEBI:29105"/>
        <label>1</label>
    </ligand>
</feature>
<feature type="binding site" evidence="1">
    <location>
        <position position="462"/>
    </location>
    <ligand>
        <name>Mg(2+)</name>
        <dbReference type="ChEBI" id="CHEBI:18420"/>
    </ligand>
</feature>
<feature type="binding site" evidence="1">
    <location>
        <position position="464"/>
    </location>
    <ligand>
        <name>Mg(2+)</name>
        <dbReference type="ChEBI" id="CHEBI:18420"/>
    </ligand>
</feature>
<feature type="binding site" evidence="1">
    <location>
        <position position="466"/>
    </location>
    <ligand>
        <name>Mg(2+)</name>
        <dbReference type="ChEBI" id="CHEBI:18420"/>
    </ligand>
</feature>
<feature type="binding site" evidence="1">
    <location>
        <position position="820"/>
    </location>
    <ligand>
        <name>Zn(2+)</name>
        <dbReference type="ChEBI" id="CHEBI:29105"/>
        <label>2</label>
    </ligand>
</feature>
<feature type="binding site" evidence="1">
    <location>
        <position position="893"/>
    </location>
    <ligand>
        <name>Zn(2+)</name>
        <dbReference type="ChEBI" id="CHEBI:29105"/>
        <label>2</label>
    </ligand>
</feature>
<feature type="binding site" evidence="1">
    <location>
        <position position="900"/>
    </location>
    <ligand>
        <name>Zn(2+)</name>
        <dbReference type="ChEBI" id="CHEBI:29105"/>
        <label>2</label>
    </ligand>
</feature>
<feature type="binding site" evidence="1">
    <location>
        <position position="903"/>
    </location>
    <ligand>
        <name>Zn(2+)</name>
        <dbReference type="ChEBI" id="CHEBI:29105"/>
        <label>2</label>
    </ligand>
</feature>
<reference key="1">
    <citation type="submission" date="2008-03" db="EMBL/GenBank/DDBJ databases">
        <title>Complete sequence of chromosome of Methylobacterium radiotolerans JCM 2831.</title>
        <authorList>
            <consortium name="US DOE Joint Genome Institute"/>
            <person name="Copeland A."/>
            <person name="Lucas S."/>
            <person name="Lapidus A."/>
            <person name="Glavina del Rio T."/>
            <person name="Dalin E."/>
            <person name="Tice H."/>
            <person name="Bruce D."/>
            <person name="Goodwin L."/>
            <person name="Pitluck S."/>
            <person name="Kiss H."/>
            <person name="Brettin T."/>
            <person name="Detter J.C."/>
            <person name="Han C."/>
            <person name="Kuske C.R."/>
            <person name="Schmutz J."/>
            <person name="Larimer F."/>
            <person name="Land M."/>
            <person name="Hauser L."/>
            <person name="Kyrpides N."/>
            <person name="Mikhailova N."/>
            <person name="Marx C.J."/>
            <person name="Richardson P."/>
        </authorList>
    </citation>
    <scope>NUCLEOTIDE SEQUENCE [LARGE SCALE GENOMIC DNA]</scope>
    <source>
        <strain>ATCC 27329 / DSM 1819 / JCM 2831 / NBRC 15690 / NCIMB 10815 / 0-1</strain>
    </source>
</reference>
<gene>
    <name evidence="1" type="primary">rpoC</name>
    <name type="ordered locus">Mrad2831_3838</name>
</gene>
<organism>
    <name type="scientific">Methylobacterium radiotolerans (strain ATCC 27329 / DSM 1819 / JCM 2831 / NBRC 15690 / NCIMB 10815 / 0-1)</name>
    <dbReference type="NCBI Taxonomy" id="426355"/>
    <lineage>
        <taxon>Bacteria</taxon>
        <taxon>Pseudomonadati</taxon>
        <taxon>Pseudomonadota</taxon>
        <taxon>Alphaproteobacteria</taxon>
        <taxon>Hyphomicrobiales</taxon>
        <taxon>Methylobacteriaceae</taxon>
        <taxon>Methylobacterium</taxon>
    </lineage>
</organism>
<comment type="function">
    <text evidence="1">DNA-dependent RNA polymerase catalyzes the transcription of DNA into RNA using the four ribonucleoside triphosphates as substrates.</text>
</comment>
<comment type="catalytic activity">
    <reaction evidence="1">
        <text>RNA(n) + a ribonucleoside 5'-triphosphate = RNA(n+1) + diphosphate</text>
        <dbReference type="Rhea" id="RHEA:21248"/>
        <dbReference type="Rhea" id="RHEA-COMP:14527"/>
        <dbReference type="Rhea" id="RHEA-COMP:17342"/>
        <dbReference type="ChEBI" id="CHEBI:33019"/>
        <dbReference type="ChEBI" id="CHEBI:61557"/>
        <dbReference type="ChEBI" id="CHEBI:140395"/>
        <dbReference type="EC" id="2.7.7.6"/>
    </reaction>
</comment>
<comment type="cofactor">
    <cofactor evidence="1">
        <name>Mg(2+)</name>
        <dbReference type="ChEBI" id="CHEBI:18420"/>
    </cofactor>
    <text evidence="1">Binds 1 Mg(2+) ion per subunit.</text>
</comment>
<comment type="cofactor">
    <cofactor evidence="1">
        <name>Zn(2+)</name>
        <dbReference type="ChEBI" id="CHEBI:29105"/>
    </cofactor>
    <text evidence="1">Binds 2 Zn(2+) ions per subunit.</text>
</comment>
<comment type="subunit">
    <text evidence="1">The RNAP catalytic core consists of 2 alpha, 1 beta, 1 beta' and 1 omega subunit. When a sigma factor is associated with the core the holoenzyme is formed, which can initiate transcription.</text>
</comment>
<comment type="similarity">
    <text evidence="1">Belongs to the RNA polymerase beta' chain family.</text>
</comment>
<proteinExistence type="inferred from homology"/>
<protein>
    <recommendedName>
        <fullName evidence="1">DNA-directed RNA polymerase subunit beta'</fullName>
        <shortName evidence="1">RNAP subunit beta'</shortName>
        <ecNumber evidence="1">2.7.7.6</ecNumber>
    </recommendedName>
    <alternativeName>
        <fullName evidence="1">RNA polymerase subunit beta'</fullName>
    </alternativeName>
    <alternativeName>
        <fullName evidence="1">Transcriptase subunit beta'</fullName>
    </alternativeName>
</protein>
<accession>B1LY42</accession>
<dbReference type="EC" id="2.7.7.6" evidence="1"/>
<dbReference type="EMBL" id="CP001001">
    <property type="protein sequence ID" value="ACB25813.1"/>
    <property type="molecule type" value="Genomic_DNA"/>
</dbReference>
<dbReference type="RefSeq" id="WP_012320771.1">
    <property type="nucleotide sequence ID" value="NC_010505.1"/>
</dbReference>
<dbReference type="SMR" id="B1LY42"/>
<dbReference type="STRING" id="426355.Mrad2831_3838"/>
<dbReference type="GeneID" id="6139892"/>
<dbReference type="KEGG" id="mrd:Mrad2831_3838"/>
<dbReference type="eggNOG" id="COG0086">
    <property type="taxonomic scope" value="Bacteria"/>
</dbReference>
<dbReference type="HOGENOM" id="CLU_000524_3_1_5"/>
<dbReference type="OrthoDB" id="9815296at2"/>
<dbReference type="Proteomes" id="UP000006589">
    <property type="component" value="Chromosome"/>
</dbReference>
<dbReference type="GO" id="GO:0000428">
    <property type="term" value="C:DNA-directed RNA polymerase complex"/>
    <property type="evidence" value="ECO:0007669"/>
    <property type="project" value="UniProtKB-KW"/>
</dbReference>
<dbReference type="GO" id="GO:0003677">
    <property type="term" value="F:DNA binding"/>
    <property type="evidence" value="ECO:0007669"/>
    <property type="project" value="UniProtKB-UniRule"/>
</dbReference>
<dbReference type="GO" id="GO:0003899">
    <property type="term" value="F:DNA-directed RNA polymerase activity"/>
    <property type="evidence" value="ECO:0007669"/>
    <property type="project" value="UniProtKB-UniRule"/>
</dbReference>
<dbReference type="GO" id="GO:0000287">
    <property type="term" value="F:magnesium ion binding"/>
    <property type="evidence" value="ECO:0007669"/>
    <property type="project" value="UniProtKB-UniRule"/>
</dbReference>
<dbReference type="GO" id="GO:0008270">
    <property type="term" value="F:zinc ion binding"/>
    <property type="evidence" value="ECO:0007669"/>
    <property type="project" value="UniProtKB-UniRule"/>
</dbReference>
<dbReference type="GO" id="GO:0006351">
    <property type="term" value="P:DNA-templated transcription"/>
    <property type="evidence" value="ECO:0007669"/>
    <property type="project" value="UniProtKB-UniRule"/>
</dbReference>
<dbReference type="CDD" id="cd02655">
    <property type="entry name" value="RNAP_beta'_C"/>
    <property type="match status" value="1"/>
</dbReference>
<dbReference type="CDD" id="cd01609">
    <property type="entry name" value="RNAP_beta'_N"/>
    <property type="match status" value="1"/>
</dbReference>
<dbReference type="Gene3D" id="1.10.132.30">
    <property type="match status" value="1"/>
</dbReference>
<dbReference type="Gene3D" id="1.10.150.390">
    <property type="match status" value="1"/>
</dbReference>
<dbReference type="Gene3D" id="1.10.1790.20">
    <property type="match status" value="1"/>
</dbReference>
<dbReference type="Gene3D" id="1.10.40.90">
    <property type="match status" value="1"/>
</dbReference>
<dbReference type="Gene3D" id="2.40.40.20">
    <property type="match status" value="1"/>
</dbReference>
<dbReference type="Gene3D" id="2.40.50.100">
    <property type="match status" value="3"/>
</dbReference>
<dbReference type="Gene3D" id="4.10.860.120">
    <property type="entry name" value="RNA polymerase II, clamp domain"/>
    <property type="match status" value="1"/>
</dbReference>
<dbReference type="Gene3D" id="1.10.274.100">
    <property type="entry name" value="RNA polymerase Rpb1, domain 3"/>
    <property type="match status" value="2"/>
</dbReference>
<dbReference type="HAMAP" id="MF_01322">
    <property type="entry name" value="RNApol_bact_RpoC"/>
    <property type="match status" value="1"/>
</dbReference>
<dbReference type="InterPro" id="IPR045867">
    <property type="entry name" value="DNA-dir_RpoC_beta_prime"/>
</dbReference>
<dbReference type="InterPro" id="IPR012754">
    <property type="entry name" value="DNA-dir_RpoC_beta_prime_bact"/>
</dbReference>
<dbReference type="InterPro" id="IPR000722">
    <property type="entry name" value="RNA_pol_asu"/>
</dbReference>
<dbReference type="InterPro" id="IPR006592">
    <property type="entry name" value="RNA_pol_N"/>
</dbReference>
<dbReference type="InterPro" id="IPR007080">
    <property type="entry name" value="RNA_pol_Rpb1_1"/>
</dbReference>
<dbReference type="InterPro" id="IPR007066">
    <property type="entry name" value="RNA_pol_Rpb1_3"/>
</dbReference>
<dbReference type="InterPro" id="IPR042102">
    <property type="entry name" value="RNA_pol_Rpb1_3_sf"/>
</dbReference>
<dbReference type="InterPro" id="IPR007083">
    <property type="entry name" value="RNA_pol_Rpb1_4"/>
</dbReference>
<dbReference type="InterPro" id="IPR007081">
    <property type="entry name" value="RNA_pol_Rpb1_5"/>
</dbReference>
<dbReference type="InterPro" id="IPR044893">
    <property type="entry name" value="RNA_pol_Rpb1_clamp_domain"/>
</dbReference>
<dbReference type="InterPro" id="IPR038120">
    <property type="entry name" value="Rpb1_funnel_sf"/>
</dbReference>
<dbReference type="NCBIfam" id="TIGR02386">
    <property type="entry name" value="rpoC_TIGR"/>
    <property type="match status" value="1"/>
</dbReference>
<dbReference type="PANTHER" id="PTHR19376">
    <property type="entry name" value="DNA-DIRECTED RNA POLYMERASE"/>
    <property type="match status" value="1"/>
</dbReference>
<dbReference type="PANTHER" id="PTHR19376:SF54">
    <property type="entry name" value="DNA-DIRECTED RNA POLYMERASE SUBUNIT BETA"/>
    <property type="match status" value="1"/>
</dbReference>
<dbReference type="Pfam" id="PF04997">
    <property type="entry name" value="RNA_pol_Rpb1_1"/>
    <property type="match status" value="1"/>
</dbReference>
<dbReference type="Pfam" id="PF00623">
    <property type="entry name" value="RNA_pol_Rpb1_2"/>
    <property type="match status" value="1"/>
</dbReference>
<dbReference type="Pfam" id="PF04983">
    <property type="entry name" value="RNA_pol_Rpb1_3"/>
    <property type="match status" value="1"/>
</dbReference>
<dbReference type="Pfam" id="PF05000">
    <property type="entry name" value="RNA_pol_Rpb1_4"/>
    <property type="match status" value="1"/>
</dbReference>
<dbReference type="Pfam" id="PF04998">
    <property type="entry name" value="RNA_pol_Rpb1_5"/>
    <property type="match status" value="1"/>
</dbReference>
<dbReference type="SMART" id="SM00663">
    <property type="entry name" value="RPOLA_N"/>
    <property type="match status" value="1"/>
</dbReference>
<dbReference type="SUPFAM" id="SSF64484">
    <property type="entry name" value="beta and beta-prime subunits of DNA dependent RNA-polymerase"/>
    <property type="match status" value="1"/>
</dbReference>
<sequence length="1403" mass="154555">MNQEVMNLFNQQAQPVSFDQIKISISSPEKILSWSYGEIKKPETINYRTFKPERDGLFCARIFGPIKDYECLCGKYKRMKYKGVICEKCGVEVTLARVRRDRMGHIELAAPVAHIWFLKSLPSRIGLLLDMALKDLERILYFESYCVIEPGLTPLKERQLLSEEEYLRAQEEYGEDSFTAMIGAEAIRRILQELDLDKIANDLREEIAVTTSELKPKKLLKRLKIIEAFQMSGNKPEWMILTVVPVIPPDLRPLVPLDGGRFATSDLNDLYRRVINRNNRLKRLIELRAPDIIIRNEKRMLQEAVDALFDNGRRGRVITGANKRPLKSLADMLKGKQGRFRQNLLGKRVDYSGRSVIVVGPELKLHQCGLPKKMALELFKPFIYARLDAKGFSATVKQAKKLVEKEKPEVWDILDEVIREHPVMLNRAPTLHRLGIQAFEPKLIEGKAIQLHPLVCAAFNADFDGDQMAVHVPLSLEAQLEARVLMMSTNNILHPANGQPIIVPSQDIVLGLYYLSIVAEGAPGEYKPDNAKNPMQGVYGDMGELEHALAAKAVSLHSKIKWRWTGIGPDGEPLTKTYETTPGRVILSGALPKHAKVPFDVVNKLMTKKEISAMIDTVYRHCGQKESVIFCDRIMALGFNHAFKAGISFGKDDMVVPENKWSIVDTTRALVKDYEQQYNDGLITQGEKYNKVVDAWAKCSDKLAAEMMGRISSVQKDEKGADKQVNSIYMMSHSGARGSPAQMKQLAAMRGLMAKPSGEIIETPIISNFKEGLDVLEYFNSTHGARKGLADTALKTANSGYLTRRLVDVAQDAVIREVDCGTTSGIKMRAIVDAGQVVATLATRILGRATAEDLVAADGTVIVKTGETIEERHLPAINAAGIQEVKIRSVLVCATKSGVCATCYGRDLARGTPVNMGEAVGVIAAQSIGEPGTQLTMRTFHIGGAAQIADSSFIESSFEGTIKIRNRAVAKNTDGDLIATGRNVAVVIVGSDGVERAVHRLQYGAKLRVDEGDKIKRGQRIAEWDPYTRPILTEVDGIVAYEDLVDGQSMTETTDESTGIAKRVVVDWRGSARTSDLKPAMVVVDRDGKALKLPRGSDARYFLPVDAIIGFDPGATVKAGDILARVSTDSAKTRDITGGLPRVAELFEARRPKDAAIIAEKSGTIAFGRDYKNKRRLTLTPHDGSEAVEYLIPKGKHIHLQDGDVVELGDYIVDGNPAPHDILAIKGVEELAAYLVNEIQEVYRLQGVSINDKHIEVIVRQMLQKVEVTDGGDSDILSGDQIDRTELTDYNEKLLAEGKKPIQGVPVLLGITKASLQTKSFISAASFQETTRVLTEAAVNGKVDTLEGLKENVIVGSLIPAGTGSMVADIRSIARRRDAMILQQKQAESGAMPVEELPPAAAE</sequence>